<organism>
    <name type="scientific">Influenza A virus (strain A/Shearwater/Australia/1972 H6N5)</name>
    <dbReference type="NCBI Taxonomy" id="383604"/>
    <lineage>
        <taxon>Viruses</taxon>
        <taxon>Riboviria</taxon>
        <taxon>Orthornavirae</taxon>
        <taxon>Negarnaviricota</taxon>
        <taxon>Polyploviricotina</taxon>
        <taxon>Insthoviricetes</taxon>
        <taxon>Articulavirales</taxon>
        <taxon>Orthomyxoviridae</taxon>
        <taxon>Alphainfluenzavirus</taxon>
        <taxon>Alphainfluenzavirus influenzae</taxon>
        <taxon>Influenza A virus</taxon>
    </lineage>
</organism>
<evidence type="ECO:0000255" key="1">
    <source>
        <dbReference type="HAMAP-Rule" id="MF_04069"/>
    </source>
</evidence>
<evidence type="ECO:0000256" key="2">
    <source>
        <dbReference type="SAM" id="MobiDB-lite"/>
    </source>
</evidence>
<feature type="chain" id="PRO_0000326354" description="Matrix protein 2">
    <location>
        <begin position="1"/>
        <end position="97"/>
    </location>
</feature>
<feature type="topological domain" description="Virion surface" evidence="1">
    <location>
        <begin position="1"/>
        <end position="22"/>
    </location>
</feature>
<feature type="transmembrane region" description="Helical; Signal-anchor for type III membrane protein" evidence="1">
    <location>
        <begin position="23"/>
        <end position="43"/>
    </location>
</feature>
<feature type="topological domain" description="Intravirion" evidence="1">
    <location>
        <begin position="44"/>
        <end position="97"/>
    </location>
</feature>
<feature type="region of interest" description="Disordered" evidence="2">
    <location>
        <begin position="60"/>
        <end position="83"/>
    </location>
</feature>
<feature type="site" description="Essential for channel activity, possibly by being protonated during channel activation, and by forming the channel gate and the selective filter" evidence="1">
    <location>
        <position position="37"/>
    </location>
</feature>
<feature type="site" description="Seems to be involved in pH gating" evidence="1">
    <location>
        <position position="41"/>
    </location>
</feature>
<feature type="modified residue" description="Phosphoserine; by host" evidence="1">
    <location>
        <position position="64"/>
    </location>
</feature>
<feature type="modified residue" description="Phosphoserine; by host" evidence="1">
    <location>
        <position position="82"/>
    </location>
</feature>
<feature type="lipid moiety-binding region" description="S-palmitoyl cysteine; by host" evidence="1">
    <location>
        <position position="50"/>
    </location>
</feature>
<feature type="disulfide bond" description="Interchain (with C-17)" evidence="1">
    <location>
        <position position="17"/>
    </location>
</feature>
<dbReference type="EMBL" id="L25831">
    <property type="protein sequence ID" value="AAA43249.1"/>
    <property type="molecule type" value="Genomic_RNA"/>
</dbReference>
<dbReference type="SMR" id="Q67146"/>
<dbReference type="Proteomes" id="UP000157292">
    <property type="component" value="Genome"/>
</dbReference>
<dbReference type="GO" id="GO:0020002">
    <property type="term" value="C:host cell plasma membrane"/>
    <property type="evidence" value="ECO:0007669"/>
    <property type="project" value="UniProtKB-SubCell"/>
</dbReference>
<dbReference type="GO" id="GO:0016020">
    <property type="term" value="C:membrane"/>
    <property type="evidence" value="ECO:0007669"/>
    <property type="project" value="UniProtKB-UniRule"/>
</dbReference>
<dbReference type="GO" id="GO:0055036">
    <property type="term" value="C:virion membrane"/>
    <property type="evidence" value="ECO:0007669"/>
    <property type="project" value="UniProtKB-SubCell"/>
</dbReference>
<dbReference type="GO" id="GO:0005216">
    <property type="term" value="F:monoatomic ion channel activity"/>
    <property type="evidence" value="ECO:0007669"/>
    <property type="project" value="UniProtKB-UniRule"/>
</dbReference>
<dbReference type="GO" id="GO:0015078">
    <property type="term" value="F:proton transmembrane transporter activity"/>
    <property type="evidence" value="ECO:0007669"/>
    <property type="project" value="UniProtKB-UniRule"/>
</dbReference>
<dbReference type="GO" id="GO:0051259">
    <property type="term" value="P:protein complex oligomerization"/>
    <property type="evidence" value="ECO:0007669"/>
    <property type="project" value="UniProtKB-UniRule"/>
</dbReference>
<dbReference type="GO" id="GO:0044694">
    <property type="term" value="P:symbiont genome entry into host cell via pore formation in plasma membrane"/>
    <property type="evidence" value="ECO:0007669"/>
    <property type="project" value="UniProtKB-UniRule"/>
</dbReference>
<dbReference type="GO" id="GO:0140321">
    <property type="term" value="P:symbiont-mediated suppression of host autophagy"/>
    <property type="evidence" value="ECO:0007669"/>
    <property type="project" value="UniProtKB-KW"/>
</dbReference>
<dbReference type="Gene3D" id="6.10.250.1640">
    <property type="match status" value="1"/>
</dbReference>
<dbReference type="HAMAP" id="MF_04069">
    <property type="entry name" value="INFV_M2"/>
    <property type="match status" value="1"/>
</dbReference>
<dbReference type="InterPro" id="IPR002089">
    <property type="entry name" value="Flu_M2"/>
</dbReference>
<dbReference type="Pfam" id="PF00599">
    <property type="entry name" value="Flu_M2"/>
    <property type="match status" value="1"/>
</dbReference>
<comment type="function">
    <text evidence="1">Forms a proton-selective ion channel that is necessary for the efficient release of the viral genome during virus entry. After attaching to the cell surface, the virion enters the cell by endocytosis. Acidification of the endosome triggers M2 ion channel activity. The influx of protons into virion interior is believed to disrupt interactions between the viral ribonucleoprotein (RNP), matrix protein 1 (M1), and lipid bilayers, thereby freeing the viral genome from interaction with viral proteins and enabling RNA segments to migrate to the host cell nucleus, where influenza virus RNA transcription and replication occur. Also plays a role in viral proteins secretory pathway. Elevates the intravesicular pH of normally acidic compartments, such as trans-Golgi network, preventing newly formed hemagglutinin from premature switching to the fusion-active conformation.</text>
</comment>
<comment type="activity regulation">
    <text>The M2 protein from most influenza A strains is inhibited by amantadine and rimantadine, resulting in viral uncoating incapacity. Emergence of amantadine-resistant variants is usually rapid.</text>
</comment>
<comment type="subunit">
    <text evidence="1">Homotetramer; composed of two disulfide-linked dimers held together by non-covalent interactions. May interact with matrix protein 1.</text>
</comment>
<comment type="subcellular location">
    <subcellularLocation>
        <location evidence="1">Virion membrane</location>
    </subcellularLocation>
    <subcellularLocation>
        <location evidence="1">Host apical cell membrane</location>
        <topology evidence="1">Single-pass type III membrane protein</topology>
    </subcellularLocation>
    <text evidence="1">Abundantly expressed at the apical plasma membrane in infected polarized epithelial cells, in close proximity to budding and assembled virions. Minor component of virions (only 16-20 molecules/virion).</text>
</comment>
<comment type="alternative products">
    <event type="alternative splicing"/>
    <isoform>
        <id>Q67146-1</id>
        <name>M2</name>
        <sequence type="displayed"/>
    </isoform>
    <isoform>
        <id>Q67147-1</id>
        <name>M1</name>
        <sequence type="external"/>
    </isoform>
    <text>Only the first 9 residues are shared by the 2 isoforms.</text>
</comment>
<comment type="domain">
    <text evidence="1">Cytoplasmic tail plays an important role in virion assembly and morphogenesis.</text>
</comment>
<comment type="miscellaneous">
    <text evidence="1">When the channel is activated, one or more imidazole moieties of His-37 probably become bi-protonated.</text>
</comment>
<comment type="similarity">
    <text evidence="1">Belongs to the influenza viruses matrix protein M2 family.</text>
</comment>
<proteinExistence type="inferred from homology"/>
<organismHost>
    <name type="scientific">Aves</name>
    <dbReference type="NCBI Taxonomy" id="8782"/>
</organismHost>
<accession>Q67146</accession>
<reference key="1">
    <citation type="submission" date="1993-11" db="EMBL/GenBank/DDBJ databases">
        <title>Sequence of the matrix protein gene of Influenza A/Shearwater/Australia/1/72.</title>
        <authorList>
            <person name="Ward A.C."/>
            <person name="Harley V.R."/>
        </authorList>
    </citation>
    <scope>NUCLEOTIDE SEQUENCE [GENOMIC RNA]</scope>
</reference>
<sequence length="97" mass="11218">MSLLTEVETPTRNGWECKYSDSSDPLVIAASIIGILHLILWILDRLFFKCIYRRLKYGLKRGPSTEGVPESMREEYRQEQQSAVDVDDGHFVNIELE</sequence>
<keyword id="KW-0025">Alternative splicing</keyword>
<keyword id="KW-1015">Disulfide bond</keyword>
<keyword id="KW-1032">Host cell membrane</keyword>
<keyword id="KW-1043">Host membrane</keyword>
<keyword id="KW-0945">Host-virus interaction</keyword>
<keyword id="KW-0375">Hydrogen ion transport</keyword>
<keyword id="KW-1083">Inhibition of host autophagy by virus</keyword>
<keyword id="KW-0407">Ion channel</keyword>
<keyword id="KW-0406">Ion transport</keyword>
<keyword id="KW-0449">Lipoprotein</keyword>
<keyword id="KW-0472">Membrane</keyword>
<keyword id="KW-0564">Palmitate</keyword>
<keyword id="KW-0597">Phosphoprotein</keyword>
<keyword id="KW-0735">Signal-anchor</keyword>
<keyword id="KW-0812">Transmembrane</keyword>
<keyword id="KW-1133">Transmembrane helix</keyword>
<keyword id="KW-0813">Transport</keyword>
<keyword id="KW-1182">Viral ion channel</keyword>
<keyword id="KW-0946">Virion</keyword>
<gene>
    <name evidence="1" type="primary">M</name>
</gene>
<protein>
    <recommendedName>
        <fullName evidence="1">Matrix protein 2</fullName>
    </recommendedName>
    <alternativeName>
        <fullName evidence="1">Proton channel protein M2</fullName>
    </alternativeName>
</protein>
<name>M2_I72A5</name>